<gene>
    <name type="primary">cheA</name>
    <name type="ordered locus">STM1921</name>
</gene>
<reference key="1">
    <citation type="journal article" date="1988" name="Proc. Natl. Acad. Sci. U.S.A.">
        <title>CheA protein, a central regulator of bacterial chemotaxis, belongs to a family of proteins that control gene expression in response to changing environmental conditions.</title>
        <authorList>
            <person name="Stock A."/>
            <person name="Chen T."/>
            <person name="Welsh D."/>
            <person name="Stock J."/>
        </authorList>
    </citation>
    <scope>NUCLEOTIDE SEQUENCE [GENOMIC DNA]</scope>
</reference>
<reference key="2">
    <citation type="journal article" date="2001" name="Nature">
        <title>Complete genome sequence of Salmonella enterica serovar Typhimurium LT2.</title>
        <authorList>
            <person name="McClelland M."/>
            <person name="Sanderson K.E."/>
            <person name="Spieth J."/>
            <person name="Clifton S.W."/>
            <person name="Latreille P."/>
            <person name="Courtney L."/>
            <person name="Porwollik S."/>
            <person name="Ali J."/>
            <person name="Dante M."/>
            <person name="Du F."/>
            <person name="Hou S."/>
            <person name="Layman D."/>
            <person name="Leonard S."/>
            <person name="Nguyen C."/>
            <person name="Scott K."/>
            <person name="Holmes A."/>
            <person name="Grewal N."/>
            <person name="Mulvaney E."/>
            <person name="Ryan E."/>
            <person name="Sun H."/>
            <person name="Florea L."/>
            <person name="Miller W."/>
            <person name="Stoneking T."/>
            <person name="Nhan M."/>
            <person name="Waterston R."/>
            <person name="Wilson R.K."/>
        </authorList>
    </citation>
    <scope>NUCLEOTIDE SEQUENCE [LARGE SCALE GENOMIC DNA]</scope>
    <source>
        <strain>LT2 / SGSC1412 / ATCC 700720</strain>
    </source>
</reference>
<accession>P09384</accession>
<name>CHEA_SALTY</name>
<comment type="function">
    <text>Involved in the transmission of sensory signals from the chemoreceptors to the flagellar motors. CheA is autophosphorylated; it can transfer its phosphate group to either CheB or CheY.</text>
</comment>
<comment type="catalytic activity">
    <reaction>
        <text>ATP + protein L-histidine = ADP + protein N-phospho-L-histidine.</text>
        <dbReference type="EC" id="2.7.13.3"/>
    </reaction>
</comment>
<comment type="subunit">
    <text>Trimer or tetramer.</text>
</comment>
<comment type="subcellular location">
    <subcellularLocation>
        <location>Cytoplasm</location>
    </subcellularLocation>
</comment>
<comment type="domain">
    <text>May have three functional domains: one for interaction with CheB and CheY, a second for regulating phosphorylation and controlling the stability of the protein, and a third for receiving input signals regulating CheA activity.</text>
</comment>
<organism>
    <name type="scientific">Salmonella typhimurium (strain LT2 / SGSC1412 / ATCC 700720)</name>
    <dbReference type="NCBI Taxonomy" id="99287"/>
    <lineage>
        <taxon>Bacteria</taxon>
        <taxon>Pseudomonadati</taxon>
        <taxon>Pseudomonadota</taxon>
        <taxon>Gammaproteobacteria</taxon>
        <taxon>Enterobacterales</taxon>
        <taxon>Enterobacteriaceae</taxon>
        <taxon>Salmonella</taxon>
    </lineage>
</organism>
<sequence length="671" mass="73013">MSMDISDFYQTFFDEADELLADMEQHLLDLVPESPDAEQLNAIFRAAHSIKGGAGTFGFTILQETTHLMENLLDEARRGEMQLNTDIINLFLETKDIMQEQLDAYKNSEEPDAASFEYICNALRQLALEAKGETTPAVVETAALSAAIQEESVAETESPRDESKLRIVLSRLKANEVDLLEEELGNLATLTDVVKGADSLSATLDGSVAEDDIVAVLCFVIEADQIAFEKVVAAPVEKAQEKTEVAPVAPPAVVAPAAKSAAHEHHAGREKPARERESTSIRVAVEKVDQLINLVGELVITQSMLAQRSNELDPVNHGDLITSMGQLQRNARDLQESVMSIRMMPMEYVFSRFPRLVRDLAGKLGKQVELTLVGSSTELDKSLIERIIDPLTHLVRNSLDHGIEMPEKRLEAGKNVVGNLILSAEHQGGNICIEVTDDGAGLNRERILAKAMSQGMAVNENMTDDEVGMLIFAPGFSTAEQVTDVSGRGVGMDVVKRNIQEMGGHVEIQSKQGSGTTIRILLPLTLAILDGMSVRVAGEVFILPLNAVMESLQPREEDLHPLAGGERVLEVRGEYLPLVELWKVFDVDGAKTEATQGIVVILQSAGRRYALLVDQLIGQHQVVVKNLESNYRKVPGISAATILGDGSVALIVDVSALQGLNREQRMAITAA</sequence>
<protein>
    <recommendedName>
        <fullName>Chemotaxis protein CheA</fullName>
        <ecNumber>2.7.13.3</ecNumber>
    </recommendedName>
</protein>
<keyword id="KW-0002">3D-structure</keyword>
<keyword id="KW-0067">ATP-binding</keyword>
<keyword id="KW-0145">Chemotaxis</keyword>
<keyword id="KW-0963">Cytoplasm</keyword>
<keyword id="KW-0418">Kinase</keyword>
<keyword id="KW-0547">Nucleotide-binding</keyword>
<keyword id="KW-0597">Phosphoprotein</keyword>
<keyword id="KW-1185">Reference proteome</keyword>
<keyword id="KW-0808">Transferase</keyword>
<keyword id="KW-0902">Two-component regulatory system</keyword>
<feature type="chain" id="PRO_0000074710" description="Chemotaxis protein CheA">
    <location>
        <begin position="1"/>
        <end position="671"/>
    </location>
</feature>
<feature type="domain" description="HPt" evidence="3">
    <location>
        <begin position="1"/>
        <end position="105"/>
    </location>
</feature>
<feature type="domain" description="Histidine kinase" evidence="2">
    <location>
        <begin position="274"/>
        <end position="526"/>
    </location>
</feature>
<feature type="domain" description="CheW-like" evidence="1">
    <location>
        <begin position="528"/>
        <end position="663"/>
    </location>
</feature>
<feature type="region of interest" description="Disordered" evidence="4">
    <location>
        <begin position="256"/>
        <end position="278"/>
    </location>
</feature>
<feature type="compositionally biased region" description="Basic and acidic residues" evidence="4">
    <location>
        <begin position="261"/>
        <end position="278"/>
    </location>
</feature>
<feature type="modified residue" description="Phosphohistidine; by autocatalysis" evidence="2">
    <location>
        <position position="48"/>
    </location>
</feature>
<feature type="helix" evidence="5">
    <location>
        <begin position="5"/>
        <end position="8"/>
    </location>
</feature>
<feature type="helix" evidence="5">
    <location>
        <begin position="9"/>
        <end position="29"/>
    </location>
</feature>
<feature type="helix" evidence="5">
    <location>
        <begin position="37"/>
        <end position="56"/>
    </location>
</feature>
<feature type="helix" evidence="5">
    <location>
        <begin position="60"/>
        <end position="77"/>
    </location>
</feature>
<feature type="helix" evidence="5">
    <location>
        <begin position="85"/>
        <end position="106"/>
    </location>
</feature>
<feature type="helix" evidence="5">
    <location>
        <begin position="113"/>
        <end position="130"/>
    </location>
</feature>
<evidence type="ECO:0000255" key="1">
    <source>
        <dbReference type="PROSITE-ProRule" id="PRU00052"/>
    </source>
</evidence>
<evidence type="ECO:0000255" key="2">
    <source>
        <dbReference type="PROSITE-ProRule" id="PRU00107"/>
    </source>
</evidence>
<evidence type="ECO:0000255" key="3">
    <source>
        <dbReference type="PROSITE-ProRule" id="PRU00110"/>
    </source>
</evidence>
<evidence type="ECO:0000256" key="4">
    <source>
        <dbReference type="SAM" id="MobiDB-lite"/>
    </source>
</evidence>
<evidence type="ECO:0007829" key="5">
    <source>
        <dbReference type="PDB" id="1I5N"/>
    </source>
</evidence>
<proteinExistence type="evidence at protein level"/>
<dbReference type="EC" id="2.7.13.3"/>
<dbReference type="EMBL" id="J03611">
    <property type="protein sequence ID" value="AAA27034.1"/>
    <property type="molecule type" value="Genomic_DNA"/>
</dbReference>
<dbReference type="EMBL" id="AE006468">
    <property type="protein sequence ID" value="AAL20837.1"/>
    <property type="molecule type" value="Genomic_DNA"/>
</dbReference>
<dbReference type="PIR" id="A28959">
    <property type="entry name" value="A28959"/>
</dbReference>
<dbReference type="RefSeq" id="NP_460878.1">
    <property type="nucleotide sequence ID" value="NC_003197.2"/>
</dbReference>
<dbReference type="RefSeq" id="WP_000061302.1">
    <property type="nucleotide sequence ID" value="NC_003197.2"/>
</dbReference>
<dbReference type="PDB" id="1I5N">
    <property type="method" value="X-ray"/>
    <property type="resolution" value="2.14 A"/>
    <property type="chains" value="A/B/C/D=1-138"/>
</dbReference>
<dbReference type="PDBsum" id="1I5N"/>
<dbReference type="SMR" id="P09384"/>
<dbReference type="DIP" id="DIP-61270N"/>
<dbReference type="IntAct" id="P09384">
    <property type="interactions" value="2"/>
</dbReference>
<dbReference type="STRING" id="99287.STM1921"/>
<dbReference type="PaxDb" id="99287-STM1921"/>
<dbReference type="GeneID" id="1253442"/>
<dbReference type="KEGG" id="stm:STM1921"/>
<dbReference type="PATRIC" id="fig|99287.12.peg.2038"/>
<dbReference type="HOGENOM" id="CLU_000650_3_6_6"/>
<dbReference type="OMA" id="IILNMRM"/>
<dbReference type="PhylomeDB" id="P09384"/>
<dbReference type="BioCyc" id="SENT99287:STM1921-MONOMER"/>
<dbReference type="BRENDA" id="2.7.13.3">
    <property type="organism ID" value="5542"/>
</dbReference>
<dbReference type="EvolutionaryTrace" id="P09384"/>
<dbReference type="Proteomes" id="UP000001014">
    <property type="component" value="Chromosome"/>
</dbReference>
<dbReference type="GO" id="GO:0005737">
    <property type="term" value="C:cytoplasm"/>
    <property type="evidence" value="ECO:0007669"/>
    <property type="project" value="UniProtKB-SubCell"/>
</dbReference>
<dbReference type="GO" id="GO:0005524">
    <property type="term" value="F:ATP binding"/>
    <property type="evidence" value="ECO:0007669"/>
    <property type="project" value="UniProtKB-KW"/>
</dbReference>
<dbReference type="GO" id="GO:0000155">
    <property type="term" value="F:phosphorelay sensor kinase activity"/>
    <property type="evidence" value="ECO:0007669"/>
    <property type="project" value="InterPro"/>
</dbReference>
<dbReference type="GO" id="GO:0006935">
    <property type="term" value="P:chemotaxis"/>
    <property type="evidence" value="ECO:0007669"/>
    <property type="project" value="UniProtKB-KW"/>
</dbReference>
<dbReference type="CDD" id="cd00731">
    <property type="entry name" value="CheA_reg"/>
    <property type="match status" value="1"/>
</dbReference>
<dbReference type="CDD" id="cd16916">
    <property type="entry name" value="HATPase_CheA-like"/>
    <property type="match status" value="1"/>
</dbReference>
<dbReference type="CDD" id="cd00088">
    <property type="entry name" value="HPT"/>
    <property type="match status" value="1"/>
</dbReference>
<dbReference type="FunFam" id="2.30.30.40:FF:000048">
    <property type="entry name" value="Chemotaxis protein CheA, putative"/>
    <property type="match status" value="1"/>
</dbReference>
<dbReference type="FunFam" id="3.30.565.10:FF:000016">
    <property type="entry name" value="Chemotaxis protein CheA, putative"/>
    <property type="match status" value="1"/>
</dbReference>
<dbReference type="Gene3D" id="3.30.70.400">
    <property type="entry name" value="CheY-binding domain of CheA"/>
    <property type="match status" value="1"/>
</dbReference>
<dbReference type="Gene3D" id="1.10.287.560">
    <property type="entry name" value="Histidine kinase CheA-like, homodimeric domain"/>
    <property type="match status" value="1"/>
</dbReference>
<dbReference type="Gene3D" id="3.30.565.10">
    <property type="entry name" value="Histidine kinase-like ATPase, C-terminal domain"/>
    <property type="match status" value="1"/>
</dbReference>
<dbReference type="Gene3D" id="1.20.120.160">
    <property type="entry name" value="HPT domain"/>
    <property type="match status" value="1"/>
</dbReference>
<dbReference type="Gene3D" id="2.30.30.40">
    <property type="entry name" value="SH3 Domains"/>
    <property type="match status" value="1"/>
</dbReference>
<dbReference type="InterPro" id="IPR051315">
    <property type="entry name" value="Bact_Chemotaxis_CheA"/>
</dbReference>
<dbReference type="InterPro" id="IPR004105">
    <property type="entry name" value="CheA-like_dim"/>
</dbReference>
<dbReference type="InterPro" id="IPR037006">
    <property type="entry name" value="CheA-like_homodim_sf"/>
</dbReference>
<dbReference type="InterPro" id="IPR036061">
    <property type="entry name" value="CheW-like_dom_sf"/>
</dbReference>
<dbReference type="InterPro" id="IPR002545">
    <property type="entry name" value="CheW-lke_dom"/>
</dbReference>
<dbReference type="InterPro" id="IPR015162">
    <property type="entry name" value="CheY-binding"/>
</dbReference>
<dbReference type="InterPro" id="IPR035891">
    <property type="entry name" value="CheY-binding_CheA"/>
</dbReference>
<dbReference type="InterPro" id="IPR036890">
    <property type="entry name" value="HATPase_C_sf"/>
</dbReference>
<dbReference type="InterPro" id="IPR005467">
    <property type="entry name" value="His_kinase_dom"/>
</dbReference>
<dbReference type="InterPro" id="IPR036097">
    <property type="entry name" value="HisK_dim/P_sf"/>
</dbReference>
<dbReference type="InterPro" id="IPR036641">
    <property type="entry name" value="HPT_dom_sf"/>
</dbReference>
<dbReference type="InterPro" id="IPR004358">
    <property type="entry name" value="Sig_transdc_His_kin-like_C"/>
</dbReference>
<dbReference type="InterPro" id="IPR008207">
    <property type="entry name" value="Sig_transdc_His_kin_Hpt_dom"/>
</dbReference>
<dbReference type="NCBIfam" id="NF007835">
    <property type="entry name" value="PRK10547.1"/>
    <property type="match status" value="1"/>
</dbReference>
<dbReference type="PANTHER" id="PTHR43395:SF10">
    <property type="entry name" value="CHEMOTAXIS PROTEIN CHEA"/>
    <property type="match status" value="1"/>
</dbReference>
<dbReference type="PANTHER" id="PTHR43395">
    <property type="entry name" value="SENSOR HISTIDINE KINASE CHEA"/>
    <property type="match status" value="1"/>
</dbReference>
<dbReference type="Pfam" id="PF01584">
    <property type="entry name" value="CheW"/>
    <property type="match status" value="1"/>
</dbReference>
<dbReference type="Pfam" id="PF09078">
    <property type="entry name" value="CheY-binding"/>
    <property type="match status" value="1"/>
</dbReference>
<dbReference type="Pfam" id="PF02895">
    <property type="entry name" value="H-kinase_dim"/>
    <property type="match status" value="1"/>
</dbReference>
<dbReference type="Pfam" id="PF02518">
    <property type="entry name" value="HATPase_c"/>
    <property type="match status" value="1"/>
</dbReference>
<dbReference type="Pfam" id="PF01627">
    <property type="entry name" value="Hpt"/>
    <property type="match status" value="1"/>
</dbReference>
<dbReference type="PRINTS" id="PR00344">
    <property type="entry name" value="BCTRLSENSOR"/>
</dbReference>
<dbReference type="SMART" id="SM00260">
    <property type="entry name" value="CheW"/>
    <property type="match status" value="1"/>
</dbReference>
<dbReference type="SMART" id="SM01231">
    <property type="entry name" value="H-kinase_dim"/>
    <property type="match status" value="1"/>
</dbReference>
<dbReference type="SMART" id="SM00387">
    <property type="entry name" value="HATPase_c"/>
    <property type="match status" value="1"/>
</dbReference>
<dbReference type="SMART" id="SM00073">
    <property type="entry name" value="HPT"/>
    <property type="match status" value="1"/>
</dbReference>
<dbReference type="SUPFAM" id="SSF55874">
    <property type="entry name" value="ATPase domain of HSP90 chaperone/DNA topoisomerase II/histidine kinase"/>
    <property type="match status" value="1"/>
</dbReference>
<dbReference type="SUPFAM" id="SSF50341">
    <property type="entry name" value="CheW-like"/>
    <property type="match status" value="1"/>
</dbReference>
<dbReference type="SUPFAM" id="SSF55052">
    <property type="entry name" value="CheY-binding domain of CheA"/>
    <property type="match status" value="1"/>
</dbReference>
<dbReference type="SUPFAM" id="SSF47226">
    <property type="entry name" value="Histidine-containing phosphotransfer domain, HPT domain"/>
    <property type="match status" value="1"/>
</dbReference>
<dbReference type="SUPFAM" id="SSF47384">
    <property type="entry name" value="Homodimeric domain of signal transducing histidine kinase"/>
    <property type="match status" value="1"/>
</dbReference>
<dbReference type="PROSITE" id="PS50851">
    <property type="entry name" value="CHEW"/>
    <property type="match status" value="1"/>
</dbReference>
<dbReference type="PROSITE" id="PS50109">
    <property type="entry name" value="HIS_KIN"/>
    <property type="match status" value="1"/>
</dbReference>
<dbReference type="PROSITE" id="PS50894">
    <property type="entry name" value="HPT"/>
    <property type="match status" value="1"/>
</dbReference>